<accession>A1AGM6</accession>
<keyword id="KW-0963">Cytoplasm</keyword>
<keyword id="KW-0251">Elongation factor</keyword>
<keyword id="KW-0342">GTP-binding</keyword>
<keyword id="KW-0378">Hydrolase</keyword>
<keyword id="KW-0460">Magnesium</keyword>
<keyword id="KW-0479">Metal-binding</keyword>
<keyword id="KW-0547">Nucleotide-binding</keyword>
<keyword id="KW-0648">Protein biosynthesis</keyword>
<keyword id="KW-1185">Reference proteome</keyword>
<reference key="1">
    <citation type="journal article" date="2007" name="J. Bacteriol.">
        <title>The genome sequence of avian pathogenic Escherichia coli strain O1:K1:H7 shares strong similarities with human extraintestinal pathogenic E. coli genomes.</title>
        <authorList>
            <person name="Johnson T.J."/>
            <person name="Kariyawasam S."/>
            <person name="Wannemuehler Y."/>
            <person name="Mangiamele P."/>
            <person name="Johnson S.J."/>
            <person name="Doetkott C."/>
            <person name="Skyberg J.A."/>
            <person name="Lynne A.M."/>
            <person name="Johnson J.R."/>
            <person name="Nolan L.K."/>
        </authorList>
    </citation>
    <scope>NUCLEOTIDE SEQUENCE [LARGE SCALE GENOMIC DNA]</scope>
</reference>
<feature type="chain" id="PRO_0000337388" description="Elongation factor Tu 1">
    <location>
        <begin position="1"/>
        <end position="394"/>
    </location>
</feature>
<feature type="domain" description="tr-type G">
    <location>
        <begin position="10"/>
        <end position="204"/>
    </location>
</feature>
<feature type="region of interest" description="G1" evidence="1">
    <location>
        <begin position="19"/>
        <end position="26"/>
    </location>
</feature>
<feature type="region of interest" description="G2" evidence="1">
    <location>
        <begin position="60"/>
        <end position="64"/>
    </location>
</feature>
<feature type="region of interest" description="G3" evidence="1">
    <location>
        <begin position="81"/>
        <end position="84"/>
    </location>
</feature>
<feature type="region of interest" description="G4" evidence="1">
    <location>
        <begin position="136"/>
        <end position="139"/>
    </location>
</feature>
<feature type="region of interest" description="G5" evidence="1">
    <location>
        <begin position="174"/>
        <end position="176"/>
    </location>
</feature>
<feature type="binding site" evidence="2">
    <location>
        <begin position="19"/>
        <end position="26"/>
    </location>
    <ligand>
        <name>GTP</name>
        <dbReference type="ChEBI" id="CHEBI:37565"/>
    </ligand>
</feature>
<feature type="binding site" evidence="2">
    <location>
        <position position="26"/>
    </location>
    <ligand>
        <name>Mg(2+)</name>
        <dbReference type="ChEBI" id="CHEBI:18420"/>
    </ligand>
</feature>
<feature type="binding site" evidence="2">
    <location>
        <begin position="81"/>
        <end position="85"/>
    </location>
    <ligand>
        <name>GTP</name>
        <dbReference type="ChEBI" id="CHEBI:37565"/>
    </ligand>
</feature>
<feature type="binding site" evidence="2">
    <location>
        <begin position="136"/>
        <end position="139"/>
    </location>
    <ligand>
        <name>GTP</name>
        <dbReference type="ChEBI" id="CHEBI:37565"/>
    </ligand>
</feature>
<sequence>MSKEKFERTKPHVNVGTIGHVDHGKTTLTAAITTVLAKTYGGAARAFDQIDNAPEEKARGITINTSHVEYDTPTRHYAHVDCPGHADYVKNMITGAAQMDGAILVVAATDGPMPQTREHILLGRQVGVPYIIVFLNKCDMVDDEELLELVEMEVRELLSQYDFPGDDTPIVRGSALKALEGDAEWEAKILELAGFLDSYIPEPERAIDKPFLLPIEDVFSISGRGTVVTGRVERGIIKVGEEVEIVGIKETQKSTCTGVEMFRKLLDEGRAGENVGVLLRGIKREEIERGQVLAKPGTIKPHTKFESEVYILSKDEGGRHTPFFKGYRPQFYFRTTDVTGTIELPEGVEMVMPGDNIKMVVTLIHPIAMDDGLRFAIREGGRTVGAGVVAKVLG</sequence>
<gene>
    <name evidence="2" type="primary">tuf1</name>
    <name type="ordered locus">Ecok1_33220</name>
    <name type="ORF">APECO1_3114</name>
</gene>
<organism>
    <name type="scientific">Escherichia coli O1:K1 / APEC</name>
    <dbReference type="NCBI Taxonomy" id="405955"/>
    <lineage>
        <taxon>Bacteria</taxon>
        <taxon>Pseudomonadati</taxon>
        <taxon>Pseudomonadota</taxon>
        <taxon>Gammaproteobacteria</taxon>
        <taxon>Enterobacterales</taxon>
        <taxon>Enterobacteriaceae</taxon>
        <taxon>Escherichia</taxon>
    </lineage>
</organism>
<comment type="function">
    <text evidence="2">GTP hydrolase that promotes the GTP-dependent binding of aminoacyl-tRNA to the A-site of ribosomes during protein biosynthesis.</text>
</comment>
<comment type="catalytic activity">
    <reaction evidence="2">
        <text>GTP + H2O = GDP + phosphate + H(+)</text>
        <dbReference type="Rhea" id="RHEA:19669"/>
        <dbReference type="ChEBI" id="CHEBI:15377"/>
        <dbReference type="ChEBI" id="CHEBI:15378"/>
        <dbReference type="ChEBI" id="CHEBI:37565"/>
        <dbReference type="ChEBI" id="CHEBI:43474"/>
        <dbReference type="ChEBI" id="CHEBI:58189"/>
        <dbReference type="EC" id="3.6.5.3"/>
    </reaction>
    <physiologicalReaction direction="left-to-right" evidence="2">
        <dbReference type="Rhea" id="RHEA:19670"/>
    </physiologicalReaction>
</comment>
<comment type="subunit">
    <text evidence="2">Monomer.</text>
</comment>
<comment type="subcellular location">
    <subcellularLocation>
        <location evidence="2">Cytoplasm</location>
    </subcellularLocation>
</comment>
<comment type="similarity">
    <text evidence="2">Belongs to the TRAFAC class translation factor GTPase superfamily. Classic translation factor GTPase family. EF-Tu/EF-1A subfamily.</text>
</comment>
<comment type="sequence caution" evidence="3">
    <conflict type="erroneous initiation">
        <sequence resource="EMBL-CDS" id="ABJ02816"/>
    </conflict>
</comment>
<evidence type="ECO:0000250" key="1"/>
<evidence type="ECO:0000255" key="2">
    <source>
        <dbReference type="HAMAP-Rule" id="MF_00118"/>
    </source>
</evidence>
<evidence type="ECO:0000305" key="3"/>
<name>EFTU1_ECOK1</name>
<protein>
    <recommendedName>
        <fullName evidence="2">Elongation factor Tu 1</fullName>
        <shortName evidence="2">EF-Tu 1</shortName>
        <ecNumber evidence="2">3.6.5.3</ecNumber>
    </recommendedName>
</protein>
<dbReference type="EC" id="3.6.5.3" evidence="2"/>
<dbReference type="EMBL" id="CP000468">
    <property type="protein sequence ID" value="ABJ02816.1"/>
    <property type="status" value="ALT_INIT"/>
    <property type="molecule type" value="Genomic_DNA"/>
</dbReference>
<dbReference type="BMRB" id="A1AGM6"/>
<dbReference type="SMR" id="A1AGM6"/>
<dbReference type="KEGG" id="ecv:APECO1_3114"/>
<dbReference type="HOGENOM" id="CLU_007265_0_2_6"/>
<dbReference type="Proteomes" id="UP000008216">
    <property type="component" value="Chromosome"/>
</dbReference>
<dbReference type="GO" id="GO:0005829">
    <property type="term" value="C:cytosol"/>
    <property type="evidence" value="ECO:0007669"/>
    <property type="project" value="TreeGrafter"/>
</dbReference>
<dbReference type="GO" id="GO:0005525">
    <property type="term" value="F:GTP binding"/>
    <property type="evidence" value="ECO:0007669"/>
    <property type="project" value="UniProtKB-UniRule"/>
</dbReference>
<dbReference type="GO" id="GO:0003924">
    <property type="term" value="F:GTPase activity"/>
    <property type="evidence" value="ECO:0007669"/>
    <property type="project" value="InterPro"/>
</dbReference>
<dbReference type="GO" id="GO:0097216">
    <property type="term" value="F:guanosine tetraphosphate binding"/>
    <property type="evidence" value="ECO:0007669"/>
    <property type="project" value="UniProtKB-ARBA"/>
</dbReference>
<dbReference type="GO" id="GO:0003746">
    <property type="term" value="F:translation elongation factor activity"/>
    <property type="evidence" value="ECO:0007669"/>
    <property type="project" value="UniProtKB-UniRule"/>
</dbReference>
<dbReference type="CDD" id="cd01884">
    <property type="entry name" value="EF_Tu"/>
    <property type="match status" value="1"/>
</dbReference>
<dbReference type="CDD" id="cd03697">
    <property type="entry name" value="EFTU_II"/>
    <property type="match status" value="1"/>
</dbReference>
<dbReference type="CDD" id="cd03707">
    <property type="entry name" value="EFTU_III"/>
    <property type="match status" value="1"/>
</dbReference>
<dbReference type="FunFam" id="2.40.30.10:FF:000001">
    <property type="entry name" value="Elongation factor Tu"/>
    <property type="match status" value="1"/>
</dbReference>
<dbReference type="FunFam" id="3.40.50.300:FF:000003">
    <property type="entry name" value="Elongation factor Tu"/>
    <property type="match status" value="1"/>
</dbReference>
<dbReference type="Gene3D" id="3.40.50.300">
    <property type="entry name" value="P-loop containing nucleotide triphosphate hydrolases"/>
    <property type="match status" value="1"/>
</dbReference>
<dbReference type="Gene3D" id="2.40.30.10">
    <property type="entry name" value="Translation factors"/>
    <property type="match status" value="2"/>
</dbReference>
<dbReference type="HAMAP" id="MF_00118_B">
    <property type="entry name" value="EF_Tu_B"/>
    <property type="match status" value="1"/>
</dbReference>
<dbReference type="InterPro" id="IPR041709">
    <property type="entry name" value="EF-Tu_GTP-bd"/>
</dbReference>
<dbReference type="InterPro" id="IPR050055">
    <property type="entry name" value="EF-Tu_GTPase"/>
</dbReference>
<dbReference type="InterPro" id="IPR004161">
    <property type="entry name" value="EFTu-like_2"/>
</dbReference>
<dbReference type="InterPro" id="IPR033720">
    <property type="entry name" value="EFTU_2"/>
</dbReference>
<dbReference type="InterPro" id="IPR031157">
    <property type="entry name" value="G_TR_CS"/>
</dbReference>
<dbReference type="InterPro" id="IPR027417">
    <property type="entry name" value="P-loop_NTPase"/>
</dbReference>
<dbReference type="InterPro" id="IPR005225">
    <property type="entry name" value="Small_GTP-bd"/>
</dbReference>
<dbReference type="InterPro" id="IPR000795">
    <property type="entry name" value="T_Tr_GTP-bd_dom"/>
</dbReference>
<dbReference type="InterPro" id="IPR009000">
    <property type="entry name" value="Transl_B-barrel_sf"/>
</dbReference>
<dbReference type="InterPro" id="IPR009001">
    <property type="entry name" value="Transl_elong_EF1A/Init_IF2_C"/>
</dbReference>
<dbReference type="InterPro" id="IPR004541">
    <property type="entry name" value="Transl_elong_EFTu/EF1A_bac/org"/>
</dbReference>
<dbReference type="InterPro" id="IPR004160">
    <property type="entry name" value="Transl_elong_EFTu/EF1A_C"/>
</dbReference>
<dbReference type="NCBIfam" id="TIGR00485">
    <property type="entry name" value="EF-Tu"/>
    <property type="match status" value="1"/>
</dbReference>
<dbReference type="NCBIfam" id="NF000766">
    <property type="entry name" value="PRK00049.1"/>
    <property type="match status" value="1"/>
</dbReference>
<dbReference type="NCBIfam" id="NF009372">
    <property type="entry name" value="PRK12735.1"/>
    <property type="match status" value="1"/>
</dbReference>
<dbReference type="NCBIfam" id="NF009373">
    <property type="entry name" value="PRK12736.1"/>
    <property type="match status" value="1"/>
</dbReference>
<dbReference type="NCBIfam" id="TIGR00231">
    <property type="entry name" value="small_GTP"/>
    <property type="match status" value="1"/>
</dbReference>
<dbReference type="PANTHER" id="PTHR43721:SF22">
    <property type="entry name" value="ELONGATION FACTOR TU, MITOCHONDRIAL"/>
    <property type="match status" value="1"/>
</dbReference>
<dbReference type="PANTHER" id="PTHR43721">
    <property type="entry name" value="ELONGATION FACTOR TU-RELATED"/>
    <property type="match status" value="1"/>
</dbReference>
<dbReference type="Pfam" id="PF00009">
    <property type="entry name" value="GTP_EFTU"/>
    <property type="match status" value="1"/>
</dbReference>
<dbReference type="Pfam" id="PF03144">
    <property type="entry name" value="GTP_EFTU_D2"/>
    <property type="match status" value="1"/>
</dbReference>
<dbReference type="Pfam" id="PF03143">
    <property type="entry name" value="GTP_EFTU_D3"/>
    <property type="match status" value="1"/>
</dbReference>
<dbReference type="PRINTS" id="PR00315">
    <property type="entry name" value="ELONGATNFCT"/>
</dbReference>
<dbReference type="SUPFAM" id="SSF50465">
    <property type="entry name" value="EF-Tu/eEF-1alpha/eIF2-gamma C-terminal domain"/>
    <property type="match status" value="1"/>
</dbReference>
<dbReference type="SUPFAM" id="SSF52540">
    <property type="entry name" value="P-loop containing nucleoside triphosphate hydrolases"/>
    <property type="match status" value="1"/>
</dbReference>
<dbReference type="SUPFAM" id="SSF50447">
    <property type="entry name" value="Translation proteins"/>
    <property type="match status" value="1"/>
</dbReference>
<dbReference type="PROSITE" id="PS00301">
    <property type="entry name" value="G_TR_1"/>
    <property type="match status" value="1"/>
</dbReference>
<dbReference type="PROSITE" id="PS51722">
    <property type="entry name" value="G_TR_2"/>
    <property type="match status" value="1"/>
</dbReference>
<proteinExistence type="inferred from homology"/>